<protein>
    <recommendedName>
        <fullName>RING finger protein 24</fullName>
    </recommendedName>
</protein>
<comment type="function">
    <text evidence="3">May play a role in TRPCs intracellular trafficking.</text>
</comment>
<comment type="subunit">
    <text evidence="3 4">Interacts with TRPC1, TRPC3, TRPC4, TRPC5, TRPC6 and TRPC7.</text>
</comment>
<comment type="interaction">
    <interactant intactId="EBI-10195462">
        <id>Q9Y225</id>
    </interactant>
    <interactant intactId="EBI-1224427">
        <id>P07919</id>
        <label>UQCRH</label>
    </interactant>
    <organismsDiffer>false</organismsDiffer>
    <experiments>3</experiments>
</comment>
<comment type="interaction">
    <interactant intactId="EBI-13044680">
        <id>Q9Y225-2</id>
    </interactant>
    <interactant intactId="EBI-2813554">
        <id>Q8WTS1</id>
        <label>ABHD5</label>
    </interactant>
    <organismsDiffer>false</organismsDiffer>
    <experiments>3</experiments>
</comment>
<comment type="interaction">
    <interactant intactId="EBI-13044680">
        <id>Q9Y225-2</id>
    </interactant>
    <interactant intactId="EBI-3506974">
        <id>Q9NVT9</id>
        <label>ARMC1</label>
    </interactant>
    <organismsDiffer>false</organismsDiffer>
    <experiments>3</experiments>
</comment>
<comment type="interaction">
    <interactant intactId="EBI-13044680">
        <id>Q9Y225-2</id>
    </interactant>
    <interactant intactId="EBI-749464">
        <id>Q12983</id>
        <label>BNIP3</label>
    </interactant>
    <organismsDiffer>false</organismsDiffer>
    <experiments>3</experiments>
</comment>
<comment type="interaction">
    <interactant intactId="EBI-13044680">
        <id>Q9Y225-2</id>
    </interactant>
    <interactant intactId="EBI-12172273">
        <id>O95406</id>
        <label>CNIH1</label>
    </interactant>
    <organismsDiffer>false</organismsDiffer>
    <experiments>3</experiments>
</comment>
<comment type="interaction">
    <interactant intactId="EBI-13044680">
        <id>Q9Y225-2</id>
    </interactant>
    <interactant intactId="EBI-17231387">
        <id>Q6ZVE7</id>
        <label>GOLT1A</label>
    </interactant>
    <organismsDiffer>false</organismsDiffer>
    <experiments>3</experiments>
</comment>
<comment type="interaction">
    <interactant intactId="EBI-13044680">
        <id>Q9Y225-2</id>
    </interactant>
    <interactant intactId="EBI-12925734">
        <id>Q86UP9</id>
        <label>LHFPL3</label>
    </interactant>
    <organismsDiffer>false</organismsDiffer>
    <experiments>3</experiments>
</comment>
<comment type="interaction">
    <interactant intactId="EBI-13044680">
        <id>Q9Y225-2</id>
    </interactant>
    <interactant intactId="EBI-373355">
        <id>Q5SR56</id>
        <label>MFSD14B</label>
    </interactant>
    <organismsDiffer>false</organismsDiffer>
    <experiments>3</experiments>
</comment>
<comment type="interaction">
    <interactant intactId="EBI-13044680">
        <id>Q9Y225-2</id>
    </interactant>
    <interactant intactId="EBI-3919611">
        <id>Q16617</id>
        <label>NKG7</label>
    </interactant>
    <organismsDiffer>false</organismsDiffer>
    <experiments>3</experiments>
</comment>
<comment type="interaction">
    <interactant intactId="EBI-13044680">
        <id>Q9Y225-2</id>
    </interactant>
    <interactant intactId="EBI-10264528">
        <id>Q8IZ57</id>
        <label>NRSN1</label>
    </interactant>
    <organismsDiffer>false</organismsDiffer>
    <experiments>3</experiments>
</comment>
<comment type="interaction">
    <interactant intactId="EBI-13044680">
        <id>Q9Y225-2</id>
    </interactant>
    <interactant intactId="EBI-6393623">
        <id>P21589</id>
        <label>NT5E</label>
    </interactant>
    <organismsDiffer>false</organismsDiffer>
    <experiments>3</experiments>
</comment>
<comment type="interaction">
    <interactant intactId="EBI-13044680">
        <id>Q9Y225-2</id>
    </interactant>
    <interactant intactId="EBI-12188331">
        <id>P60201-2</id>
        <label>PLP1</label>
    </interactant>
    <organismsDiffer>false</organismsDiffer>
    <experiments>3</experiments>
</comment>
<comment type="interaction">
    <interactant intactId="EBI-13044680">
        <id>Q9Y225-2</id>
    </interactant>
    <interactant intactId="EBI-18159983">
        <id>Q3KNW5</id>
        <label>SLC10A6</label>
    </interactant>
    <organismsDiffer>false</organismsDiffer>
    <experiments>3</experiments>
</comment>
<comment type="interaction">
    <interactant intactId="EBI-13044680">
        <id>Q9Y225-2</id>
    </interactant>
    <interactant intactId="EBI-6268651">
        <id>Q9NPL8</id>
        <label>TIMMDC1</label>
    </interactant>
    <organismsDiffer>false</organismsDiffer>
    <experiments>3</experiments>
</comment>
<comment type="interaction">
    <interactant intactId="EBI-13044680">
        <id>Q9Y225-2</id>
    </interactant>
    <interactant intactId="EBI-6447886">
        <id>Q9Y320</id>
        <label>TMX2</label>
    </interactant>
    <organismsDiffer>false</organismsDiffer>
    <experiments>3</experiments>
</comment>
<comment type="interaction">
    <interactant intactId="EBI-13044680">
        <id>Q9Y225-2</id>
    </interactant>
    <interactant intactId="EBI-12097582">
        <id>P23763-3</id>
        <label>VAMP1</label>
    </interactant>
    <organismsDiffer>false</organismsDiffer>
    <experiments>3</experiments>
</comment>
<comment type="subcellular location">
    <subcellularLocation>
        <location evidence="3">Golgi apparatus membrane</location>
        <topology evidence="3">Single-pass membrane protein</topology>
    </subcellularLocation>
</comment>
<comment type="alternative products">
    <event type="alternative splicing"/>
    <isoform>
        <id>Q9Y225-1</id>
        <name>1</name>
        <sequence type="displayed"/>
    </isoform>
    <isoform>
        <id>Q9Y225-2</id>
        <name>2</name>
        <sequence type="described" ref="VSP_041026"/>
    </isoform>
</comment>
<name>RNF24_HUMAN</name>
<feature type="chain" id="PRO_0000056063" description="RING finger protein 24">
    <location>
        <begin position="1"/>
        <end position="148"/>
    </location>
</feature>
<feature type="transmembrane region" description="Helical" evidence="1">
    <location>
        <begin position="24"/>
        <end position="44"/>
    </location>
</feature>
<feature type="zinc finger region" description="RING-type" evidence="2">
    <location>
        <begin position="78"/>
        <end position="119"/>
    </location>
</feature>
<feature type="splice variant" id="VSP_041026" description="In isoform 2." evidence="5">
    <original>M</original>
    <variation>MLNKSGESRYPALFPVLGGSSM</variation>
    <location>
        <position position="1"/>
    </location>
</feature>
<feature type="sequence conflict" description="In Ref. 6; CAB45279." evidence="5" ref="6">
    <original>Y</original>
    <variation>S</variation>
    <location>
        <position position="45"/>
    </location>
</feature>
<feature type="strand" evidence="6">
    <location>
        <begin position="79"/>
        <end position="81"/>
    </location>
</feature>
<feature type="strand" evidence="6">
    <location>
        <begin position="87"/>
        <end position="89"/>
    </location>
</feature>
<feature type="strand" evidence="6">
    <location>
        <begin position="91"/>
        <end position="94"/>
    </location>
</feature>
<feature type="turn" evidence="6">
    <location>
        <begin position="95"/>
        <end position="97"/>
    </location>
</feature>
<feature type="strand" evidence="6">
    <location>
        <begin position="98"/>
        <end position="101"/>
    </location>
</feature>
<feature type="helix" evidence="6">
    <location>
        <begin position="102"/>
        <end position="111"/>
    </location>
</feature>
<feature type="turn" evidence="6">
    <location>
        <begin position="116"/>
        <end position="118"/>
    </location>
</feature>
<organism>
    <name type="scientific">Homo sapiens</name>
    <name type="common">Human</name>
    <dbReference type="NCBI Taxonomy" id="9606"/>
    <lineage>
        <taxon>Eukaryota</taxon>
        <taxon>Metazoa</taxon>
        <taxon>Chordata</taxon>
        <taxon>Craniata</taxon>
        <taxon>Vertebrata</taxon>
        <taxon>Euteleostomi</taxon>
        <taxon>Mammalia</taxon>
        <taxon>Eutheria</taxon>
        <taxon>Euarchontoglires</taxon>
        <taxon>Primates</taxon>
        <taxon>Haplorrhini</taxon>
        <taxon>Catarrhini</taxon>
        <taxon>Hominidae</taxon>
        <taxon>Homo</taxon>
    </lineage>
</organism>
<proteinExistence type="evidence at protein level"/>
<accession>Q9Y225</accession>
<accession>D3DVZ2</accession>
<accession>D3DVZ3</accession>
<accession>Q9UMH1</accession>
<sequence>MSSDFPHYNFRMPNIGFQNLPLNIYIVVFGTAIFVFILSLLFCCYLIRLRHQAHKEFYAYKQVILKEKVKELNLHELCAVCLEDFKPRDELGICPCKHAFHRKCLIKWLEVRKVCPLCNMPVLQLAQLHSKQDRGPPQGPLPGAENIV</sequence>
<reference key="1">
    <citation type="submission" date="1999-07" db="EMBL/GenBank/DDBJ databases">
        <authorList>
            <person name="Stavrides G.S."/>
            <person name="Huckle E.J."/>
            <person name="Deloukas P."/>
        </authorList>
    </citation>
    <scope>NUCLEOTIDE SEQUENCE [MRNA] (ISOFORM 1)</scope>
</reference>
<reference key="2">
    <citation type="submission" date="2003-05" db="EMBL/GenBank/DDBJ databases">
        <title>Cloning of human full-length CDSs in BD Creator(TM) system donor vector.</title>
        <authorList>
            <person name="Kalnine N."/>
            <person name="Chen X."/>
            <person name="Rolfs A."/>
            <person name="Halleck A."/>
            <person name="Hines L."/>
            <person name="Eisenstein S."/>
            <person name="Koundinya M."/>
            <person name="Raphael J."/>
            <person name="Moreira D."/>
            <person name="Kelley T."/>
            <person name="LaBaer J."/>
            <person name="Lin Y."/>
            <person name="Phelan M."/>
            <person name="Farmer A."/>
        </authorList>
    </citation>
    <scope>NUCLEOTIDE SEQUENCE [LARGE SCALE MRNA] (ISOFORM 1)</scope>
</reference>
<reference key="3">
    <citation type="journal article" date="2001" name="Nature">
        <title>The DNA sequence and comparative analysis of human chromosome 20.</title>
        <authorList>
            <person name="Deloukas P."/>
            <person name="Matthews L.H."/>
            <person name="Ashurst J.L."/>
            <person name="Burton J."/>
            <person name="Gilbert J.G.R."/>
            <person name="Jones M."/>
            <person name="Stavrides G."/>
            <person name="Almeida J.P."/>
            <person name="Babbage A.K."/>
            <person name="Bagguley C.L."/>
            <person name="Bailey J."/>
            <person name="Barlow K.F."/>
            <person name="Bates K.N."/>
            <person name="Beard L.M."/>
            <person name="Beare D.M."/>
            <person name="Beasley O.P."/>
            <person name="Bird C.P."/>
            <person name="Blakey S.E."/>
            <person name="Bridgeman A.M."/>
            <person name="Brown A.J."/>
            <person name="Buck D."/>
            <person name="Burrill W.D."/>
            <person name="Butler A.P."/>
            <person name="Carder C."/>
            <person name="Carter N.P."/>
            <person name="Chapman J.C."/>
            <person name="Clamp M."/>
            <person name="Clark G."/>
            <person name="Clark L.N."/>
            <person name="Clark S.Y."/>
            <person name="Clee C.M."/>
            <person name="Clegg S."/>
            <person name="Cobley V.E."/>
            <person name="Collier R.E."/>
            <person name="Connor R.E."/>
            <person name="Corby N.R."/>
            <person name="Coulson A."/>
            <person name="Coville G.J."/>
            <person name="Deadman R."/>
            <person name="Dhami P.D."/>
            <person name="Dunn M."/>
            <person name="Ellington A.G."/>
            <person name="Frankland J.A."/>
            <person name="Fraser A."/>
            <person name="French L."/>
            <person name="Garner P."/>
            <person name="Grafham D.V."/>
            <person name="Griffiths C."/>
            <person name="Griffiths M.N.D."/>
            <person name="Gwilliam R."/>
            <person name="Hall R.E."/>
            <person name="Hammond S."/>
            <person name="Harley J.L."/>
            <person name="Heath P.D."/>
            <person name="Ho S."/>
            <person name="Holden J.L."/>
            <person name="Howden P.J."/>
            <person name="Huckle E."/>
            <person name="Hunt A.R."/>
            <person name="Hunt S.E."/>
            <person name="Jekosch K."/>
            <person name="Johnson C.M."/>
            <person name="Johnson D."/>
            <person name="Kay M.P."/>
            <person name="Kimberley A.M."/>
            <person name="King A."/>
            <person name="Knights A."/>
            <person name="Laird G.K."/>
            <person name="Lawlor S."/>
            <person name="Lehvaeslaiho M.H."/>
            <person name="Leversha M.A."/>
            <person name="Lloyd C."/>
            <person name="Lloyd D.M."/>
            <person name="Lovell J.D."/>
            <person name="Marsh V.L."/>
            <person name="Martin S.L."/>
            <person name="McConnachie L.J."/>
            <person name="McLay K."/>
            <person name="McMurray A.A."/>
            <person name="Milne S.A."/>
            <person name="Mistry D."/>
            <person name="Moore M.J.F."/>
            <person name="Mullikin J.C."/>
            <person name="Nickerson T."/>
            <person name="Oliver K."/>
            <person name="Parker A."/>
            <person name="Patel R."/>
            <person name="Pearce T.A.V."/>
            <person name="Peck A.I."/>
            <person name="Phillimore B.J.C.T."/>
            <person name="Prathalingam S.R."/>
            <person name="Plumb R.W."/>
            <person name="Ramsay H."/>
            <person name="Rice C.M."/>
            <person name="Ross M.T."/>
            <person name="Scott C.E."/>
            <person name="Sehra H.K."/>
            <person name="Shownkeen R."/>
            <person name="Sims S."/>
            <person name="Skuce C.D."/>
            <person name="Smith M.L."/>
            <person name="Soderlund C."/>
            <person name="Steward C.A."/>
            <person name="Sulston J.E."/>
            <person name="Swann R.M."/>
            <person name="Sycamore N."/>
            <person name="Taylor R."/>
            <person name="Tee L."/>
            <person name="Thomas D.W."/>
            <person name="Thorpe A."/>
            <person name="Tracey A."/>
            <person name="Tromans A.C."/>
            <person name="Vaudin M."/>
            <person name="Wall M."/>
            <person name="Wallis J.M."/>
            <person name="Whitehead S.L."/>
            <person name="Whittaker P."/>
            <person name="Willey D.L."/>
            <person name="Williams L."/>
            <person name="Williams S.A."/>
            <person name="Wilming L."/>
            <person name="Wray P.W."/>
            <person name="Hubbard T."/>
            <person name="Durbin R.M."/>
            <person name="Bentley D.R."/>
            <person name="Beck S."/>
            <person name="Rogers J."/>
        </authorList>
    </citation>
    <scope>NUCLEOTIDE SEQUENCE [LARGE SCALE GENOMIC DNA]</scope>
</reference>
<reference key="4">
    <citation type="submission" date="2005-09" db="EMBL/GenBank/DDBJ databases">
        <authorList>
            <person name="Mural R.J."/>
            <person name="Istrail S."/>
            <person name="Sutton G.G."/>
            <person name="Florea L."/>
            <person name="Halpern A.L."/>
            <person name="Mobarry C.M."/>
            <person name="Lippert R."/>
            <person name="Walenz B."/>
            <person name="Shatkay H."/>
            <person name="Dew I."/>
            <person name="Miller J.R."/>
            <person name="Flanigan M.J."/>
            <person name="Edwards N.J."/>
            <person name="Bolanos R."/>
            <person name="Fasulo D."/>
            <person name="Halldorsson B.V."/>
            <person name="Hannenhalli S."/>
            <person name="Turner R."/>
            <person name="Yooseph S."/>
            <person name="Lu F."/>
            <person name="Nusskern D.R."/>
            <person name="Shue B.C."/>
            <person name="Zheng X.H."/>
            <person name="Zhong F."/>
            <person name="Delcher A.L."/>
            <person name="Huson D.H."/>
            <person name="Kravitz S.A."/>
            <person name="Mouchard L."/>
            <person name="Reinert K."/>
            <person name="Remington K.A."/>
            <person name="Clark A.G."/>
            <person name="Waterman M.S."/>
            <person name="Eichler E.E."/>
            <person name="Adams M.D."/>
            <person name="Hunkapiller M.W."/>
            <person name="Myers E.W."/>
            <person name="Venter J.C."/>
        </authorList>
    </citation>
    <scope>NUCLEOTIDE SEQUENCE [LARGE SCALE GENOMIC DNA]</scope>
</reference>
<reference key="5">
    <citation type="journal article" date="2004" name="Genome Res.">
        <title>The status, quality, and expansion of the NIH full-length cDNA project: the Mammalian Gene Collection (MGC).</title>
        <authorList>
            <consortium name="The MGC Project Team"/>
        </authorList>
    </citation>
    <scope>NUCLEOTIDE SEQUENCE [LARGE SCALE MRNA] (ISOFORM 1)</scope>
    <source>
        <tissue>Blood</tissue>
        <tissue>Kidney</tissue>
    </source>
</reference>
<reference key="6">
    <citation type="submission" date="1999-06" db="EMBL/GenBank/DDBJ databases">
        <authorList>
            <consortium name="The European IMAGE consortium"/>
        </authorList>
    </citation>
    <scope>NUCLEOTIDE SEQUENCE [LARGE SCALE MRNA] OF 45-148</scope>
</reference>
<reference key="7">
    <citation type="journal article" date="2008" name="Cell Calcium">
        <title>RNF24, a new TRPC interacting protein, causes the intracellular retention of TRPC.</title>
        <authorList>
            <person name="Lussier M.P."/>
            <person name="Lepage P.K."/>
            <person name="Bousquet S.M."/>
            <person name="Boulay G."/>
        </authorList>
    </citation>
    <scope>FUNCTION</scope>
    <scope>INTERACTION WITH TRPC1; TRPC3; TRPC4; TRPC5; TRPC6 AND TRPC7</scope>
    <scope>SUBCELLULAR LOCATION</scope>
</reference>
<reference key="8">
    <citation type="submission" date="2009-02" db="PDB data bank">
        <title>Solution structure of RING finger from human RING finger protein 24.</title>
        <authorList>
            <consortium name="RIKEN structural genomics initiative (RSGI)"/>
        </authorList>
    </citation>
    <scope>STRUCTURE BY NMR OF 68-128 IN COMPLEX WITH ZINC</scope>
</reference>
<keyword id="KW-0002">3D-structure</keyword>
<keyword id="KW-0025">Alternative splicing</keyword>
<keyword id="KW-0333">Golgi apparatus</keyword>
<keyword id="KW-0472">Membrane</keyword>
<keyword id="KW-0479">Metal-binding</keyword>
<keyword id="KW-1267">Proteomics identification</keyword>
<keyword id="KW-1185">Reference proteome</keyword>
<keyword id="KW-0812">Transmembrane</keyword>
<keyword id="KW-1133">Transmembrane helix</keyword>
<keyword id="KW-0862">Zinc</keyword>
<keyword id="KW-0863">Zinc-finger</keyword>
<dbReference type="EMBL" id="AL096778">
    <property type="protein sequence ID" value="CAB46627.1"/>
    <property type="molecule type" value="mRNA"/>
</dbReference>
<dbReference type="EMBL" id="BT007406">
    <property type="protein sequence ID" value="AAP36074.1"/>
    <property type="molecule type" value="mRNA"/>
</dbReference>
<dbReference type="EMBL" id="AL031670">
    <property type="status" value="NOT_ANNOTATED_CDS"/>
    <property type="molecule type" value="Genomic_DNA"/>
</dbReference>
<dbReference type="EMBL" id="CH471133">
    <property type="protein sequence ID" value="EAX10467.1"/>
    <property type="molecule type" value="Genomic_DNA"/>
</dbReference>
<dbReference type="EMBL" id="CH471133">
    <property type="protein sequence ID" value="EAX10468.1"/>
    <property type="molecule type" value="Genomic_DNA"/>
</dbReference>
<dbReference type="EMBL" id="CH471133">
    <property type="protein sequence ID" value="EAX10469.1"/>
    <property type="molecule type" value="Genomic_DNA"/>
</dbReference>
<dbReference type="EMBL" id="CH471133">
    <property type="protein sequence ID" value="EAX10471.1"/>
    <property type="molecule type" value="Genomic_DNA"/>
</dbReference>
<dbReference type="EMBL" id="BC000213">
    <property type="protein sequence ID" value="AAH00213.1"/>
    <property type="molecule type" value="mRNA"/>
</dbReference>
<dbReference type="EMBL" id="BC039584">
    <property type="protein sequence ID" value="AAH39584.1"/>
    <property type="molecule type" value="mRNA"/>
</dbReference>
<dbReference type="EMBL" id="AL079313">
    <property type="protein sequence ID" value="CAB45279.1"/>
    <property type="molecule type" value="mRNA"/>
</dbReference>
<dbReference type="CCDS" id="CCDS13074.1">
    <molecule id="Q9Y225-1"/>
</dbReference>
<dbReference type="CCDS" id="CCDS46577.1">
    <molecule id="Q9Y225-2"/>
</dbReference>
<dbReference type="RefSeq" id="NP_001127809.1">
    <molecule id="Q9Y225-1"/>
    <property type="nucleotide sequence ID" value="NM_001134337.3"/>
</dbReference>
<dbReference type="RefSeq" id="NP_001127810.1">
    <molecule id="Q9Y225-2"/>
    <property type="nucleotide sequence ID" value="NM_001134338.3"/>
</dbReference>
<dbReference type="RefSeq" id="NP_001308678.1">
    <molecule id="Q9Y225-1"/>
    <property type="nucleotide sequence ID" value="NM_001321749.2"/>
</dbReference>
<dbReference type="RefSeq" id="NP_009150.1">
    <molecule id="Q9Y225-1"/>
    <property type="nucleotide sequence ID" value="NM_007219.5"/>
</dbReference>
<dbReference type="RefSeq" id="XP_011527447.1">
    <property type="nucleotide sequence ID" value="XM_011529145.2"/>
</dbReference>
<dbReference type="RefSeq" id="XP_016883109.1">
    <molecule id="Q9Y225-2"/>
    <property type="nucleotide sequence ID" value="XM_017027620.2"/>
</dbReference>
<dbReference type="RefSeq" id="XP_016883110.1">
    <molecule id="Q9Y225-2"/>
    <property type="nucleotide sequence ID" value="XM_017027621.2"/>
</dbReference>
<dbReference type="RefSeq" id="XP_047295821.1">
    <molecule id="Q9Y225-2"/>
    <property type="nucleotide sequence ID" value="XM_047439865.1"/>
</dbReference>
<dbReference type="RefSeq" id="XP_047295822.1">
    <molecule id="Q9Y225-2"/>
    <property type="nucleotide sequence ID" value="XM_047439866.1"/>
</dbReference>
<dbReference type="RefSeq" id="XP_054178886.1">
    <molecule id="Q9Y225-2"/>
    <property type="nucleotide sequence ID" value="XM_054322911.1"/>
</dbReference>
<dbReference type="RefSeq" id="XP_054178887.1">
    <molecule id="Q9Y225-2"/>
    <property type="nucleotide sequence ID" value="XM_054322912.1"/>
</dbReference>
<dbReference type="RefSeq" id="XP_054178888.1">
    <molecule id="Q9Y225-2"/>
    <property type="nucleotide sequence ID" value="XM_054322913.1"/>
</dbReference>
<dbReference type="RefSeq" id="XP_054178889.1">
    <molecule id="Q9Y225-2"/>
    <property type="nucleotide sequence ID" value="XM_054322914.1"/>
</dbReference>
<dbReference type="PDB" id="2EP4">
    <property type="method" value="NMR"/>
    <property type="chains" value="A=68-128"/>
</dbReference>
<dbReference type="PDBsum" id="2EP4"/>
<dbReference type="SMR" id="Q9Y225"/>
<dbReference type="BioGRID" id="116402">
    <property type="interactions" value="19"/>
</dbReference>
<dbReference type="FunCoup" id="Q9Y225">
    <property type="interactions" value="291"/>
</dbReference>
<dbReference type="IntAct" id="Q9Y225">
    <property type="interactions" value="16"/>
</dbReference>
<dbReference type="STRING" id="9606.ENSP00000388550"/>
<dbReference type="iPTMnet" id="Q9Y225"/>
<dbReference type="PhosphoSitePlus" id="Q9Y225"/>
<dbReference type="BioMuta" id="RNF24"/>
<dbReference type="DMDM" id="20139860"/>
<dbReference type="jPOST" id="Q9Y225"/>
<dbReference type="MassIVE" id="Q9Y225"/>
<dbReference type="PaxDb" id="9606-ENSP00000388550"/>
<dbReference type="PeptideAtlas" id="Q9Y225"/>
<dbReference type="ProteomicsDB" id="85610">
    <molecule id="Q9Y225-1"/>
</dbReference>
<dbReference type="ProteomicsDB" id="85611">
    <molecule id="Q9Y225-2"/>
</dbReference>
<dbReference type="Pumba" id="Q9Y225"/>
<dbReference type="Antibodypedia" id="23773">
    <property type="antibodies" value="106 antibodies from 18 providers"/>
</dbReference>
<dbReference type="DNASU" id="11237"/>
<dbReference type="Ensembl" id="ENST00000336095.10">
    <molecule id="Q9Y225-1"/>
    <property type="protein sequence ID" value="ENSP00000336753.5"/>
    <property type="gene ID" value="ENSG00000101236.17"/>
</dbReference>
<dbReference type="Ensembl" id="ENST00000358395.11">
    <molecule id="Q9Y225-1"/>
    <property type="protein sequence ID" value="ENSP00000351166.6"/>
    <property type="gene ID" value="ENSG00000101236.17"/>
</dbReference>
<dbReference type="Ensembl" id="ENST00000432261.6">
    <molecule id="Q9Y225-2"/>
    <property type="protein sequence ID" value="ENSP00000388550.2"/>
    <property type="gene ID" value="ENSG00000101236.17"/>
</dbReference>
<dbReference type="Ensembl" id="ENST00000545616.2">
    <molecule id="Q9Y225-2"/>
    <property type="protein sequence ID" value="ENSP00000444711.1"/>
    <property type="gene ID" value="ENSG00000101236.17"/>
</dbReference>
<dbReference type="GeneID" id="11237"/>
<dbReference type="KEGG" id="hsa:11237"/>
<dbReference type="MANE-Select" id="ENST00000358395.11">
    <property type="protein sequence ID" value="ENSP00000351166.6"/>
    <property type="RefSeq nucleotide sequence ID" value="NM_001134337.3"/>
    <property type="RefSeq protein sequence ID" value="NP_001127809.1"/>
</dbReference>
<dbReference type="UCSC" id="uc002wkh.4">
    <molecule id="Q9Y225-1"/>
    <property type="organism name" value="human"/>
</dbReference>
<dbReference type="AGR" id="HGNC:13779"/>
<dbReference type="CTD" id="11237"/>
<dbReference type="DisGeNET" id="11237"/>
<dbReference type="GeneCards" id="RNF24"/>
<dbReference type="HGNC" id="HGNC:13779">
    <property type="gene designation" value="RNF24"/>
</dbReference>
<dbReference type="HPA" id="ENSG00000101236">
    <property type="expression patterns" value="Tissue enhanced (bone)"/>
</dbReference>
<dbReference type="MIM" id="612489">
    <property type="type" value="gene"/>
</dbReference>
<dbReference type="neXtProt" id="NX_Q9Y225"/>
<dbReference type="OpenTargets" id="ENSG00000101236"/>
<dbReference type="PharmGKB" id="PA34428"/>
<dbReference type="VEuPathDB" id="HostDB:ENSG00000101236"/>
<dbReference type="eggNOG" id="KOG0800">
    <property type="taxonomic scope" value="Eukaryota"/>
</dbReference>
<dbReference type="GeneTree" id="ENSGT00940000159443"/>
<dbReference type="HOGENOM" id="CLU_142341_0_0_1"/>
<dbReference type="InParanoid" id="Q9Y225"/>
<dbReference type="OMA" id="HNKQDHG"/>
<dbReference type="OrthoDB" id="8062037at2759"/>
<dbReference type="PAN-GO" id="Q9Y225">
    <property type="GO annotations" value="3 GO annotations based on evolutionary models"/>
</dbReference>
<dbReference type="PhylomeDB" id="Q9Y225"/>
<dbReference type="PathwayCommons" id="Q9Y225"/>
<dbReference type="SignaLink" id="Q9Y225"/>
<dbReference type="SIGNOR" id="Q9Y225"/>
<dbReference type="BioGRID-ORCS" id="11237">
    <property type="hits" value="31 hits in 1195 CRISPR screens"/>
</dbReference>
<dbReference type="ChiTaRS" id="RNF24">
    <property type="organism name" value="human"/>
</dbReference>
<dbReference type="EvolutionaryTrace" id="Q9Y225"/>
<dbReference type="GeneWiki" id="RNF24"/>
<dbReference type="GenomeRNAi" id="11237"/>
<dbReference type="Pharos" id="Q9Y225">
    <property type="development level" value="Tbio"/>
</dbReference>
<dbReference type="PRO" id="PR:Q9Y225"/>
<dbReference type="Proteomes" id="UP000005640">
    <property type="component" value="Chromosome 20"/>
</dbReference>
<dbReference type="RNAct" id="Q9Y225">
    <property type="molecule type" value="protein"/>
</dbReference>
<dbReference type="Bgee" id="ENSG00000101236">
    <property type="expression patterns" value="Expressed in secondary oocyte and 182 other cell types or tissues"/>
</dbReference>
<dbReference type="GO" id="GO:0005794">
    <property type="term" value="C:Golgi apparatus"/>
    <property type="evidence" value="ECO:0000314"/>
    <property type="project" value="HPA"/>
</dbReference>
<dbReference type="GO" id="GO:0000139">
    <property type="term" value="C:Golgi membrane"/>
    <property type="evidence" value="ECO:0007669"/>
    <property type="project" value="UniProtKB-SubCell"/>
</dbReference>
<dbReference type="GO" id="GO:0008270">
    <property type="term" value="F:zinc ion binding"/>
    <property type="evidence" value="ECO:0007669"/>
    <property type="project" value="UniProtKB-KW"/>
</dbReference>
<dbReference type="CDD" id="cd16675">
    <property type="entry name" value="RING-H2_RNF24"/>
    <property type="match status" value="1"/>
</dbReference>
<dbReference type="FunFam" id="3.30.40.10:FF:000260">
    <property type="entry name" value="RING finger protein 24"/>
    <property type="match status" value="1"/>
</dbReference>
<dbReference type="Gene3D" id="3.30.40.10">
    <property type="entry name" value="Zinc/RING finger domain, C3HC4 (zinc finger)"/>
    <property type="match status" value="1"/>
</dbReference>
<dbReference type="InterPro" id="IPR050731">
    <property type="entry name" value="HRD1_E3_ubiq-ligases"/>
</dbReference>
<dbReference type="InterPro" id="IPR048025">
    <property type="entry name" value="RNF24_RING-H2"/>
</dbReference>
<dbReference type="InterPro" id="IPR001841">
    <property type="entry name" value="Znf_RING"/>
</dbReference>
<dbReference type="InterPro" id="IPR011016">
    <property type="entry name" value="Znf_RING-CH"/>
</dbReference>
<dbReference type="InterPro" id="IPR013083">
    <property type="entry name" value="Znf_RING/FYVE/PHD"/>
</dbReference>
<dbReference type="PANTHER" id="PTHR22763:SF190">
    <property type="entry name" value="RING FINGER PROTEIN 24"/>
    <property type="match status" value="1"/>
</dbReference>
<dbReference type="PANTHER" id="PTHR22763">
    <property type="entry name" value="RING ZINC FINGER PROTEIN"/>
    <property type="match status" value="1"/>
</dbReference>
<dbReference type="Pfam" id="PF13639">
    <property type="entry name" value="zf-RING_2"/>
    <property type="match status" value="1"/>
</dbReference>
<dbReference type="SMART" id="SM00184">
    <property type="entry name" value="RING"/>
    <property type="match status" value="1"/>
</dbReference>
<dbReference type="SMART" id="SM00744">
    <property type="entry name" value="RINGv"/>
    <property type="match status" value="1"/>
</dbReference>
<dbReference type="SUPFAM" id="SSF57850">
    <property type="entry name" value="RING/U-box"/>
    <property type="match status" value="1"/>
</dbReference>
<dbReference type="PROSITE" id="PS50089">
    <property type="entry name" value="ZF_RING_2"/>
    <property type="match status" value="1"/>
</dbReference>
<gene>
    <name type="primary">RNF24</name>
</gene>
<evidence type="ECO:0000255" key="1"/>
<evidence type="ECO:0000255" key="2">
    <source>
        <dbReference type="PROSITE-ProRule" id="PRU00175"/>
    </source>
</evidence>
<evidence type="ECO:0000269" key="3">
    <source>
    </source>
</evidence>
<evidence type="ECO:0000269" key="4">
    <source ref="8"/>
</evidence>
<evidence type="ECO:0000305" key="5"/>
<evidence type="ECO:0007829" key="6">
    <source>
        <dbReference type="PDB" id="2EP4"/>
    </source>
</evidence>